<sequence>MYLTIWLVSILALGTWGQKFNRFCHYNSWALSRNPQHGLVPEDIDPFLCTHLILGFAEIDESGLRLKDPNHYQQEYLYQRIVRLRRINPRLNMILSVGGWDKSQEGYSKLVSSRENILFFTKWIITYLRRHDFDGLDLDWEYPTFKGSPMGDKKKFVDLVENLAYEFDIEEIPDIKWKLTLTWTADPLESVRTSAYDIKGIASKVHNVNLKMYDFHGHWDDPLQVNHHSPLTSPNSPRNVNELAKSWVKAGVRIEKLILGIPFFGRSFTLKTANMSVPGSPAVGPGSDFGDGIPIHNLCHIIRGGTKELYLPEKKVPYIVSGSEWIGYDNPRSVMEKAQLVFNNALAGVMIYSLDMDDHHGTCGRKWPMMMAVIHGLNAYMEYIDSKHKSLELTFNKKILRARVSLRNYRRRNQQEKVAEMEQRIRHLEQELQQSMGNMAYERQQAQAMLNRGVSLPPIEQQSWSW</sequence>
<dbReference type="EC" id="3.2.1.14"/>
<dbReference type="EMBL" id="GT278709">
    <property type="status" value="NOT_ANNOTATED_CDS"/>
    <property type="molecule type" value="mRNA"/>
</dbReference>
<dbReference type="EMBL" id="GT280136">
    <property type="status" value="NOT_ANNOTATED_CDS"/>
    <property type="molecule type" value="mRNA"/>
</dbReference>
<dbReference type="EMBL" id="GT281452">
    <property type="status" value="NOT_ANNOTATED_CDS"/>
    <property type="molecule type" value="mRNA"/>
</dbReference>
<dbReference type="EMBL" id="GT281952">
    <property type="status" value="NOT_ANNOTATED_CDS"/>
    <property type="molecule type" value="mRNA"/>
</dbReference>
<dbReference type="EMBL" id="GT282837">
    <property type="status" value="NOT_ANNOTATED_CDS"/>
    <property type="molecule type" value="mRNA"/>
</dbReference>
<dbReference type="EMBL" id="EZ420284">
    <property type="status" value="NOT_ANNOTATED_CDS"/>
    <property type="molecule type" value="mRNA"/>
</dbReference>
<dbReference type="SMR" id="P86955"/>
<dbReference type="GO" id="GO:0005576">
    <property type="term" value="C:extracellular region"/>
    <property type="evidence" value="ECO:0007669"/>
    <property type="project" value="UniProtKB-SubCell"/>
</dbReference>
<dbReference type="GO" id="GO:0008061">
    <property type="term" value="F:chitin binding"/>
    <property type="evidence" value="ECO:0007669"/>
    <property type="project" value="InterPro"/>
</dbReference>
<dbReference type="GO" id="GO:0008843">
    <property type="term" value="F:endochitinase activity"/>
    <property type="evidence" value="ECO:0007669"/>
    <property type="project" value="UniProtKB-EC"/>
</dbReference>
<dbReference type="GO" id="GO:0005975">
    <property type="term" value="P:carbohydrate metabolic process"/>
    <property type="evidence" value="ECO:0007669"/>
    <property type="project" value="InterPro"/>
</dbReference>
<dbReference type="GO" id="GO:0006032">
    <property type="term" value="P:chitin catabolic process"/>
    <property type="evidence" value="ECO:0007669"/>
    <property type="project" value="TreeGrafter"/>
</dbReference>
<dbReference type="CDD" id="cd14688">
    <property type="entry name" value="bZIP_YAP"/>
    <property type="match status" value="1"/>
</dbReference>
<dbReference type="Gene3D" id="3.10.50.10">
    <property type="match status" value="1"/>
</dbReference>
<dbReference type="Gene3D" id="3.20.20.80">
    <property type="entry name" value="Glycosidases"/>
    <property type="match status" value="1"/>
</dbReference>
<dbReference type="InterPro" id="IPR011583">
    <property type="entry name" value="Chitinase_II/V-like_cat"/>
</dbReference>
<dbReference type="InterPro" id="IPR029070">
    <property type="entry name" value="Chitinase_insertion_sf"/>
</dbReference>
<dbReference type="InterPro" id="IPR001223">
    <property type="entry name" value="Glyco_hydro18_cat"/>
</dbReference>
<dbReference type="InterPro" id="IPR001579">
    <property type="entry name" value="Glyco_hydro_18_chit_AS"/>
</dbReference>
<dbReference type="InterPro" id="IPR017853">
    <property type="entry name" value="Glycoside_hydrolase_SF"/>
</dbReference>
<dbReference type="InterPro" id="IPR050314">
    <property type="entry name" value="Glycosyl_Hydrlase_18"/>
</dbReference>
<dbReference type="PANTHER" id="PTHR11177">
    <property type="entry name" value="CHITINASE"/>
    <property type="match status" value="1"/>
</dbReference>
<dbReference type="PANTHER" id="PTHR11177:SF390">
    <property type="entry name" value="CHITINASE 11"/>
    <property type="match status" value="1"/>
</dbReference>
<dbReference type="Pfam" id="PF00704">
    <property type="entry name" value="Glyco_hydro_18"/>
    <property type="match status" value="1"/>
</dbReference>
<dbReference type="SMART" id="SM00636">
    <property type="entry name" value="Glyco_18"/>
    <property type="match status" value="1"/>
</dbReference>
<dbReference type="SUPFAM" id="SSF51445">
    <property type="entry name" value="(Trans)glycosidases"/>
    <property type="match status" value="1"/>
</dbReference>
<dbReference type="SUPFAM" id="SSF54556">
    <property type="entry name" value="Chitinase insertion domain"/>
    <property type="match status" value="1"/>
</dbReference>
<dbReference type="PROSITE" id="PS01095">
    <property type="entry name" value="GH18_1"/>
    <property type="match status" value="1"/>
</dbReference>
<dbReference type="PROSITE" id="PS51910">
    <property type="entry name" value="GH18_2"/>
    <property type="match status" value="1"/>
</dbReference>
<accession>P86955</accession>
<protein>
    <recommendedName>
        <fullName>Putative chitinase</fullName>
        <ecNumber>3.2.1.14</ecNumber>
    </recommendedName>
    <alternativeName>
        <fullName>Chitinase-like protein 3</fullName>
        <shortName>Clp3</shortName>
    </alternativeName>
</protein>
<name>CHI_PINMA</name>
<proteinExistence type="evidence at protein level"/>
<reference evidence="5" key="1">
    <citation type="journal article" date="2010" name="Mol. Biol. Evol.">
        <title>Parallel evolution of nacre building gene sets in molluscs.</title>
        <authorList>
            <person name="Jackson D.J."/>
            <person name="McDougall C."/>
            <person name="Woodcroft B."/>
            <person name="Moase P."/>
            <person name="Rose R.A."/>
            <person name="Kube M."/>
            <person name="Reinhardt R."/>
            <person name="Rokhsar D.S."/>
            <person name="Montagnani C."/>
            <person name="Joubert C."/>
            <person name="Piquemal D."/>
            <person name="Degnan B.M."/>
        </authorList>
    </citation>
    <scope>NUCLEOTIDE SEQUENCE [MRNA]</scope>
    <scope>IDENTIFICATION</scope>
    <source>
        <tissue evidence="3">Mantle</tissue>
    </source>
</reference>
<reference key="2">
    <citation type="journal article" date="2012" name="Proc. Natl. Acad. Sci. U.S.A.">
        <title>Different secretory repertoires control the biomineralization processes of prism and nacre deposition of the pearl oyster shell.</title>
        <authorList>
            <person name="Marie B."/>
            <person name="Joubert C."/>
            <person name="Tayale A."/>
            <person name="Zanella-Cleon I."/>
            <person name="Belliard C."/>
            <person name="Piquemal D."/>
            <person name="Cochennec-Laureau N."/>
            <person name="Marin F."/>
            <person name="Gueguen Y."/>
            <person name="Montagnani C."/>
        </authorList>
    </citation>
    <scope>PROTEIN SEQUENCE OF 115-129; 179-192; 205-211; 257-266 AND 444-452</scope>
    <scope>SUBCELLULAR LOCATION</scope>
    <scope>TISSUE SPECIFICITY</scope>
    <source>
        <tissue>Shell</tissue>
    </source>
</reference>
<organism>
    <name type="scientific">Pinctada maxima</name>
    <name type="common">Silver-lipped pearl oyster</name>
    <name type="synonym">White-lipped pearl oyster</name>
    <dbReference type="NCBI Taxonomy" id="104660"/>
    <lineage>
        <taxon>Eukaryota</taxon>
        <taxon>Metazoa</taxon>
        <taxon>Spiralia</taxon>
        <taxon>Lophotrochozoa</taxon>
        <taxon>Mollusca</taxon>
        <taxon>Bivalvia</taxon>
        <taxon>Autobranchia</taxon>
        <taxon>Pteriomorphia</taxon>
        <taxon>Pterioida</taxon>
        <taxon>Pterioidea</taxon>
        <taxon>Pteriidae</taxon>
        <taxon>Pinctada</taxon>
    </lineage>
</organism>
<comment type="catalytic activity">
    <reaction evidence="1">
        <text>Random endo-hydrolysis of N-acetyl-beta-D-glucosaminide (1-&gt;4)-beta-linkages in chitin and chitodextrins.</text>
        <dbReference type="EC" id="3.2.1.14"/>
    </reaction>
</comment>
<comment type="subcellular location">
    <subcellularLocation>
        <location evidence="4">Secreted</location>
    </subcellularLocation>
</comment>
<comment type="tissue specificity">
    <text evidence="4">Prismatic layer of shell (at protein level). Expressed primarily in the mantle with highest level in the mantle edge and lower level in the mantle pallium.</text>
</comment>
<comment type="similarity">
    <text evidence="5">Belongs to the glycosyl hydrolase 18 family.</text>
</comment>
<comment type="sequence caution" evidence="5">
    <conflict type="frameshift">
        <sequence resource="EMBL" id="GT281452"/>
    </conflict>
</comment>
<evidence type="ECO:0000255" key="1"/>
<evidence type="ECO:0000255" key="2">
    <source>
        <dbReference type="PROSITE-ProRule" id="PRU01258"/>
    </source>
</evidence>
<evidence type="ECO:0000269" key="3">
    <source>
    </source>
</evidence>
<evidence type="ECO:0000269" key="4">
    <source>
    </source>
</evidence>
<evidence type="ECO:0000305" key="5"/>
<keyword id="KW-0175">Coiled coil</keyword>
<keyword id="KW-0903">Direct protein sequencing</keyword>
<keyword id="KW-1015">Disulfide bond</keyword>
<keyword id="KW-0326">Glycosidase</keyword>
<keyword id="KW-0378">Hydrolase</keyword>
<keyword id="KW-0964">Secreted</keyword>
<keyword id="KW-0732">Signal</keyword>
<feature type="signal peptide" evidence="1">
    <location>
        <begin position="1"/>
        <end position="17"/>
    </location>
</feature>
<feature type="chain" id="PRO_0000413069" description="Putative chitinase" evidence="1">
    <location>
        <begin position="18"/>
        <end position="466"/>
    </location>
</feature>
<feature type="domain" description="GH18" evidence="2">
    <location>
        <begin position="20"/>
        <end position="380"/>
    </location>
</feature>
<feature type="coiled-coil region" evidence="1">
    <location>
        <begin position="408"/>
        <end position="442"/>
    </location>
</feature>
<feature type="active site" description="Proton donor" evidence="2">
    <location>
        <position position="141"/>
    </location>
</feature>
<feature type="disulfide bond" evidence="2">
    <location>
        <begin position="24"/>
        <end position="49"/>
    </location>
</feature>
<feature type="sequence conflict" description="In Ref. 1; GT282837." evidence="5" ref="1">
    <original>G</original>
    <variation>C</variation>
    <location>
        <position position="135"/>
    </location>
</feature>
<feature type="sequence conflict" description="In Ref. 1; GT278709." evidence="5" ref="1">
    <original>S</original>
    <variation>N</variation>
    <location>
        <position position="148"/>
    </location>
</feature>
<feature type="sequence conflict" description="In Ref. 1; GT282837." evidence="5" ref="1">
    <original>FF</original>
    <variation>LL</variation>
    <location>
        <begin position="263"/>
        <end position="264"/>
    </location>
</feature>
<feature type="sequence conflict" description="In Ref. 1; GT282837." evidence="5" ref="1">
    <original>GSP</original>
    <variation>RIA</variation>
    <location>
        <begin position="279"/>
        <end position="281"/>
    </location>
</feature>
<feature type="sequence conflict" description="In Ref. 1; GT281452." evidence="5" ref="1">
    <original>A</original>
    <variation>S</variation>
    <location>
        <position position="402"/>
    </location>
</feature>